<comment type="function">
    <text evidence="1">Component of the eukaryotic translation initiation factor 3 (eIF-3) complex, which is involved in protein synthesis of a specialized repertoire of mRNAs and, together with other initiation factors, stimulates binding of mRNA and methionyl-tRNAi to the 40S ribosome. The eIF-3 complex specifically targets and initiates translation of a subset of mRNAs involved in cell proliferation.</text>
</comment>
<comment type="subunit">
    <text evidence="1">Component of the eukaryotic translation initiation factor 3 (eIF-3) complex.</text>
</comment>
<comment type="subcellular location">
    <subcellularLocation>
        <location evidence="1">Cytoplasm</location>
    </subcellularLocation>
</comment>
<comment type="similarity">
    <text evidence="1">Belongs to the eIF-3 subunit K family.</text>
</comment>
<proteinExistence type="inferred from homology"/>
<protein>
    <recommendedName>
        <fullName evidence="1">Eukaryotic translation initiation factor 3 subunit K</fullName>
        <shortName evidence="1">eIF3k</shortName>
    </recommendedName>
    <alternativeName>
        <fullName evidence="1">eIF-3 p25</fullName>
    </alternativeName>
</protein>
<accession>Q7S2R9</accession>
<dbReference type="EMBL" id="CM002242">
    <property type="protein sequence ID" value="EAA29710.1"/>
    <property type="molecule type" value="Genomic_DNA"/>
</dbReference>
<dbReference type="RefSeq" id="XP_958946.1">
    <property type="nucleotide sequence ID" value="XM_953853.2"/>
</dbReference>
<dbReference type="SMR" id="Q7S2R9"/>
<dbReference type="STRING" id="367110.Q7S2R9"/>
<dbReference type="PaxDb" id="5141-EFNCRP00000009513"/>
<dbReference type="EnsemblFungi" id="EAA29710">
    <property type="protein sequence ID" value="EAA29710"/>
    <property type="gene ID" value="NCU09707"/>
</dbReference>
<dbReference type="GeneID" id="3875112"/>
<dbReference type="KEGG" id="ncr:NCU09707"/>
<dbReference type="VEuPathDB" id="FungiDB:NCU09707"/>
<dbReference type="HOGENOM" id="CLU_076723_0_1_1"/>
<dbReference type="InParanoid" id="Q7S2R9"/>
<dbReference type="OMA" id="GDDLCAD"/>
<dbReference type="OrthoDB" id="337745at2759"/>
<dbReference type="Proteomes" id="UP000001805">
    <property type="component" value="Chromosome 7, Linkage Group VII"/>
</dbReference>
<dbReference type="GO" id="GO:0016282">
    <property type="term" value="C:eukaryotic 43S preinitiation complex"/>
    <property type="evidence" value="ECO:0007669"/>
    <property type="project" value="UniProtKB-UniRule"/>
</dbReference>
<dbReference type="GO" id="GO:0033290">
    <property type="term" value="C:eukaryotic 48S preinitiation complex"/>
    <property type="evidence" value="ECO:0007669"/>
    <property type="project" value="UniProtKB-UniRule"/>
</dbReference>
<dbReference type="GO" id="GO:0005852">
    <property type="term" value="C:eukaryotic translation initiation factor 3 complex"/>
    <property type="evidence" value="ECO:0000318"/>
    <property type="project" value="GO_Central"/>
</dbReference>
<dbReference type="GO" id="GO:0043022">
    <property type="term" value="F:ribosome binding"/>
    <property type="evidence" value="ECO:0007669"/>
    <property type="project" value="InterPro"/>
</dbReference>
<dbReference type="GO" id="GO:0003723">
    <property type="term" value="F:RNA binding"/>
    <property type="evidence" value="ECO:0007669"/>
    <property type="project" value="UniProtKB-UniRule"/>
</dbReference>
<dbReference type="GO" id="GO:0003743">
    <property type="term" value="F:translation initiation factor activity"/>
    <property type="evidence" value="ECO:0007669"/>
    <property type="project" value="UniProtKB-UniRule"/>
</dbReference>
<dbReference type="GO" id="GO:0001732">
    <property type="term" value="P:formation of cytoplasmic translation initiation complex"/>
    <property type="evidence" value="ECO:0007669"/>
    <property type="project" value="UniProtKB-UniRule"/>
</dbReference>
<dbReference type="GO" id="GO:0006446">
    <property type="term" value="P:regulation of translational initiation"/>
    <property type="evidence" value="ECO:0007669"/>
    <property type="project" value="InterPro"/>
</dbReference>
<dbReference type="FunFam" id="1.10.10.10:FF:000389">
    <property type="entry name" value="Eukaryotic translation initiation factor 3 subunit K"/>
    <property type="match status" value="1"/>
</dbReference>
<dbReference type="Gene3D" id="1.25.40.250">
    <property type="entry name" value="ARM repeat, domain 1"/>
    <property type="match status" value="1"/>
</dbReference>
<dbReference type="Gene3D" id="1.10.10.10">
    <property type="entry name" value="Winged helix-like DNA-binding domain superfamily/Winged helix DNA-binding domain"/>
    <property type="match status" value="1"/>
</dbReference>
<dbReference type="HAMAP" id="MF_03010">
    <property type="entry name" value="eIF3k"/>
    <property type="match status" value="1"/>
</dbReference>
<dbReference type="InterPro" id="IPR016024">
    <property type="entry name" value="ARM-type_fold"/>
</dbReference>
<dbReference type="InterPro" id="IPR033464">
    <property type="entry name" value="CSN8_PSD8_EIF3K"/>
</dbReference>
<dbReference type="InterPro" id="IPR009374">
    <property type="entry name" value="eIF3k"/>
</dbReference>
<dbReference type="InterPro" id="IPR000717">
    <property type="entry name" value="PCI_dom"/>
</dbReference>
<dbReference type="InterPro" id="IPR016020">
    <property type="entry name" value="Transl_init_fac_sub12_N_euk"/>
</dbReference>
<dbReference type="InterPro" id="IPR036388">
    <property type="entry name" value="WH-like_DNA-bd_sf"/>
</dbReference>
<dbReference type="InterPro" id="IPR036390">
    <property type="entry name" value="WH_DNA-bd_sf"/>
</dbReference>
<dbReference type="PANTHER" id="PTHR13022">
    <property type="entry name" value="EUKARYOTIC TRANSLATION INITIATION FACTOR 3 SUBUNIT 11"/>
    <property type="match status" value="1"/>
</dbReference>
<dbReference type="PANTHER" id="PTHR13022:SF0">
    <property type="entry name" value="EUKARYOTIC TRANSLATION INITIATION FACTOR 3 SUBUNIT K"/>
    <property type="match status" value="1"/>
</dbReference>
<dbReference type="Pfam" id="PF10075">
    <property type="entry name" value="CSN8_PSD8_EIF3K"/>
    <property type="match status" value="1"/>
</dbReference>
<dbReference type="SUPFAM" id="SSF48371">
    <property type="entry name" value="ARM repeat"/>
    <property type="match status" value="1"/>
</dbReference>
<dbReference type="SUPFAM" id="SSF46785">
    <property type="entry name" value="Winged helix' DNA-binding domain"/>
    <property type="match status" value="1"/>
</dbReference>
<dbReference type="PROSITE" id="PS50250">
    <property type="entry name" value="PCI"/>
    <property type="match status" value="1"/>
</dbReference>
<name>EIF3K_NEUCR</name>
<evidence type="ECO:0000255" key="1">
    <source>
        <dbReference type="HAMAP-Rule" id="MF_03010"/>
    </source>
</evidence>
<evidence type="ECO:0000255" key="2">
    <source>
        <dbReference type="PROSITE-ProRule" id="PRU01185"/>
    </source>
</evidence>
<sequence length="237" mass="26752">MNGEDPQERPDFIRAIINGLERYNPEAAGTLEAYLTQQCEEKFCDCNANRALLKLYQLNPDRIKDEVITNILVKAMTQFPSPQFDLALHLLSPSQSNPGPNSSSELTEAVSKLRALNAQLEGAEYARFWATLDSDDLYADLTTDIAGFEDMIRVRIAQLVGQSYREIQFPVLESWLGLNNSEATTQFITETCGWKVEGDVVQIPKNADNEARKAEIREDVNVDMFARVIKRSWEESA</sequence>
<feature type="chain" id="PRO_0000365062" description="Eukaryotic translation initiation factor 3 subunit K">
    <location>
        <begin position="1"/>
        <end position="237"/>
    </location>
</feature>
<feature type="domain" description="PCI" evidence="2">
    <location>
        <begin position="44"/>
        <end position="219"/>
    </location>
</feature>
<reference key="1">
    <citation type="journal article" date="2003" name="Nature">
        <title>The genome sequence of the filamentous fungus Neurospora crassa.</title>
        <authorList>
            <person name="Galagan J.E."/>
            <person name="Calvo S.E."/>
            <person name="Borkovich K.A."/>
            <person name="Selker E.U."/>
            <person name="Read N.D."/>
            <person name="Jaffe D.B."/>
            <person name="FitzHugh W."/>
            <person name="Ma L.-J."/>
            <person name="Smirnov S."/>
            <person name="Purcell S."/>
            <person name="Rehman B."/>
            <person name="Elkins T."/>
            <person name="Engels R."/>
            <person name="Wang S."/>
            <person name="Nielsen C.B."/>
            <person name="Butler J."/>
            <person name="Endrizzi M."/>
            <person name="Qui D."/>
            <person name="Ianakiev P."/>
            <person name="Bell-Pedersen D."/>
            <person name="Nelson M.A."/>
            <person name="Werner-Washburne M."/>
            <person name="Selitrennikoff C.P."/>
            <person name="Kinsey J.A."/>
            <person name="Braun E.L."/>
            <person name="Zelter A."/>
            <person name="Schulte U."/>
            <person name="Kothe G.O."/>
            <person name="Jedd G."/>
            <person name="Mewes H.-W."/>
            <person name="Staben C."/>
            <person name="Marcotte E."/>
            <person name="Greenberg D."/>
            <person name="Roy A."/>
            <person name="Foley K."/>
            <person name="Naylor J."/>
            <person name="Stange-Thomann N."/>
            <person name="Barrett R."/>
            <person name="Gnerre S."/>
            <person name="Kamal M."/>
            <person name="Kamvysselis M."/>
            <person name="Mauceli E.W."/>
            <person name="Bielke C."/>
            <person name="Rudd S."/>
            <person name="Frishman D."/>
            <person name="Krystofova S."/>
            <person name="Rasmussen C."/>
            <person name="Metzenberg R.L."/>
            <person name="Perkins D.D."/>
            <person name="Kroken S."/>
            <person name="Cogoni C."/>
            <person name="Macino G."/>
            <person name="Catcheside D.E.A."/>
            <person name="Li W."/>
            <person name="Pratt R.J."/>
            <person name="Osmani S.A."/>
            <person name="DeSouza C.P.C."/>
            <person name="Glass N.L."/>
            <person name="Orbach M.J."/>
            <person name="Berglund J.A."/>
            <person name="Voelker R."/>
            <person name="Yarden O."/>
            <person name="Plamann M."/>
            <person name="Seiler S."/>
            <person name="Dunlap J.C."/>
            <person name="Radford A."/>
            <person name="Aramayo R."/>
            <person name="Natvig D.O."/>
            <person name="Alex L.A."/>
            <person name="Mannhaupt G."/>
            <person name="Ebbole D.J."/>
            <person name="Freitag M."/>
            <person name="Paulsen I."/>
            <person name="Sachs M.S."/>
            <person name="Lander E.S."/>
            <person name="Nusbaum C."/>
            <person name="Birren B.W."/>
        </authorList>
    </citation>
    <scope>NUCLEOTIDE SEQUENCE [LARGE SCALE GENOMIC DNA]</scope>
    <source>
        <strain>ATCC 24698 / 74-OR23-1A / CBS 708.71 / DSM 1257 / FGSC 987</strain>
    </source>
</reference>
<keyword id="KW-0963">Cytoplasm</keyword>
<keyword id="KW-0396">Initiation factor</keyword>
<keyword id="KW-0648">Protein biosynthesis</keyword>
<keyword id="KW-1185">Reference proteome</keyword>
<gene>
    <name type="ORF">NCU09707</name>
</gene>
<organism>
    <name type="scientific">Neurospora crassa (strain ATCC 24698 / 74-OR23-1A / CBS 708.71 / DSM 1257 / FGSC 987)</name>
    <dbReference type="NCBI Taxonomy" id="367110"/>
    <lineage>
        <taxon>Eukaryota</taxon>
        <taxon>Fungi</taxon>
        <taxon>Dikarya</taxon>
        <taxon>Ascomycota</taxon>
        <taxon>Pezizomycotina</taxon>
        <taxon>Sordariomycetes</taxon>
        <taxon>Sordariomycetidae</taxon>
        <taxon>Sordariales</taxon>
        <taxon>Sordariaceae</taxon>
        <taxon>Neurospora</taxon>
    </lineage>
</organism>